<keyword id="KW-0028">Amino-acid biosynthesis</keyword>
<keyword id="KW-0057">Aromatic amino acid biosynthesis</keyword>
<keyword id="KW-0315">Glutamine amidotransferase</keyword>
<keyword id="KW-0456">Lyase</keyword>
<keyword id="KW-1185">Reference proteome</keyword>
<keyword id="KW-0822">Tryptophan biosynthesis</keyword>
<accession>P06558</accession>
<feature type="chain" id="PRO_0000056876" description="Anthranilate synthase component 2">
    <location>
        <begin position="1"/>
        <end position="208"/>
    </location>
</feature>
<feature type="domain" description="Glutamine amidotransferase type-1" evidence="3">
    <location>
        <begin position="3"/>
        <end position="208"/>
    </location>
</feature>
<feature type="active site" description="Nucleophile; for GATase activity" evidence="3">
    <location>
        <position position="80"/>
    </location>
</feature>
<feature type="active site" description="For GATase activity" evidence="3">
    <location>
        <position position="185"/>
    </location>
</feature>
<feature type="active site" description="For GATase activity" evidence="3">
    <location>
        <position position="187"/>
    </location>
</feature>
<feature type="binding site" evidence="2">
    <location>
        <begin position="53"/>
        <end position="55"/>
    </location>
    <ligand>
        <name>L-glutamine</name>
        <dbReference type="ChEBI" id="CHEBI:58359"/>
    </ligand>
</feature>
<feature type="binding site" evidence="2">
    <location>
        <position position="84"/>
    </location>
    <ligand>
        <name>L-glutamine</name>
        <dbReference type="ChEBI" id="CHEBI:58359"/>
    </ligand>
</feature>
<feature type="binding site" evidence="2">
    <location>
        <begin position="145"/>
        <end position="146"/>
    </location>
    <ligand>
        <name>L-glutamine</name>
        <dbReference type="ChEBI" id="CHEBI:58359"/>
    </ligand>
</feature>
<feature type="sequence conflict" description="In Ref. 1; CAA28624." evidence="4" ref="1">
    <original>I</original>
    <variation>V</variation>
    <location>
        <position position="133"/>
    </location>
</feature>
<feature type="sequence conflict" description="In Ref. 1; CAA28624." evidence="4" ref="1">
    <original>V</original>
    <variation>I</variation>
    <location>
        <position position="196"/>
    </location>
</feature>
<name>TRPG_CORGL</name>
<sequence>MTHVVLIDNHDSFVYNLVDAFAVAGYKCTVFRNTVPVETILAANPDLICLSPGPGYPADAGNMMALIERTLGQIPLLGICLGYQALIEYHGGKVEPCGPVHGTTDNMILTDAGVQSPVFAGLATDVEPDHPEIPGRKVPIGRYHSLGCVVAPDGIESLGTCSSEIGDVIMAARTTDGKAIGLQFHPESVLSPTGPVILSRCVEQLLAN</sequence>
<dbReference type="EC" id="4.1.3.27"/>
<dbReference type="EMBL" id="X04960">
    <property type="protein sequence ID" value="CAA28624.1"/>
    <property type="molecule type" value="Genomic_DNA"/>
</dbReference>
<dbReference type="EMBL" id="BA000036">
    <property type="protein sequence ID" value="BAC00425.1"/>
    <property type="molecule type" value="Genomic_DNA"/>
</dbReference>
<dbReference type="EMBL" id="BX927157">
    <property type="protein sequence ID" value="CAF18971.1"/>
    <property type="molecule type" value="Genomic_DNA"/>
</dbReference>
<dbReference type="PIR" id="C24723">
    <property type="entry name" value="C24723"/>
</dbReference>
<dbReference type="RefSeq" id="NP_602224.1">
    <property type="nucleotide sequence ID" value="NC_003450.3"/>
</dbReference>
<dbReference type="RefSeq" id="WP_003855176.1">
    <property type="nucleotide sequence ID" value="NC_006958.1"/>
</dbReference>
<dbReference type="SMR" id="P06558"/>
<dbReference type="STRING" id="196627.cg3360"/>
<dbReference type="KEGG" id="cgb:cg3360"/>
<dbReference type="KEGG" id="cgl:Cgl3031"/>
<dbReference type="PATRIC" id="fig|196627.13.peg.2965"/>
<dbReference type="eggNOG" id="COG0512">
    <property type="taxonomic scope" value="Bacteria"/>
</dbReference>
<dbReference type="HOGENOM" id="CLU_014340_1_0_11"/>
<dbReference type="OrthoDB" id="9803598at2"/>
<dbReference type="BioCyc" id="CORYNE:G18NG-12652-MONOMER"/>
<dbReference type="UniPathway" id="UPA00035">
    <property type="reaction ID" value="UER00040"/>
</dbReference>
<dbReference type="Proteomes" id="UP000000582">
    <property type="component" value="Chromosome"/>
</dbReference>
<dbReference type="Proteomes" id="UP000001009">
    <property type="component" value="Chromosome"/>
</dbReference>
<dbReference type="GO" id="GO:0005829">
    <property type="term" value="C:cytosol"/>
    <property type="evidence" value="ECO:0007669"/>
    <property type="project" value="TreeGrafter"/>
</dbReference>
<dbReference type="GO" id="GO:0004048">
    <property type="term" value="F:anthranilate phosphoribosyltransferase activity"/>
    <property type="evidence" value="ECO:0007669"/>
    <property type="project" value="TreeGrafter"/>
</dbReference>
<dbReference type="GO" id="GO:0004049">
    <property type="term" value="F:anthranilate synthase activity"/>
    <property type="evidence" value="ECO:0007669"/>
    <property type="project" value="UniProtKB-EC"/>
</dbReference>
<dbReference type="GO" id="GO:0000162">
    <property type="term" value="P:L-tryptophan biosynthetic process"/>
    <property type="evidence" value="ECO:0007669"/>
    <property type="project" value="UniProtKB-UniPathway"/>
</dbReference>
<dbReference type="GO" id="GO:0002047">
    <property type="term" value="P:phenazine biosynthetic process"/>
    <property type="evidence" value="ECO:0007669"/>
    <property type="project" value="TreeGrafter"/>
</dbReference>
<dbReference type="CDD" id="cd01743">
    <property type="entry name" value="GATase1_Anthranilate_Synthase"/>
    <property type="match status" value="1"/>
</dbReference>
<dbReference type="Gene3D" id="3.40.50.880">
    <property type="match status" value="1"/>
</dbReference>
<dbReference type="InterPro" id="IPR050472">
    <property type="entry name" value="Anth_synth/Amidotransfase"/>
</dbReference>
<dbReference type="InterPro" id="IPR029062">
    <property type="entry name" value="Class_I_gatase-like"/>
</dbReference>
<dbReference type="InterPro" id="IPR017926">
    <property type="entry name" value="GATASE"/>
</dbReference>
<dbReference type="InterPro" id="IPR006221">
    <property type="entry name" value="TrpG/PapA_dom"/>
</dbReference>
<dbReference type="NCBIfam" id="NF004169">
    <property type="entry name" value="PRK05637.1"/>
    <property type="match status" value="1"/>
</dbReference>
<dbReference type="NCBIfam" id="TIGR00566">
    <property type="entry name" value="trpG_papA"/>
    <property type="match status" value="1"/>
</dbReference>
<dbReference type="PANTHER" id="PTHR43418:SF2">
    <property type="entry name" value="BIFUNCTIONAL PROTEIN TRPGD"/>
    <property type="match status" value="1"/>
</dbReference>
<dbReference type="PANTHER" id="PTHR43418">
    <property type="entry name" value="MULTIFUNCTIONAL TRYPTOPHAN BIOSYNTHESIS PROTEIN-RELATED"/>
    <property type="match status" value="1"/>
</dbReference>
<dbReference type="Pfam" id="PF00117">
    <property type="entry name" value="GATase"/>
    <property type="match status" value="1"/>
</dbReference>
<dbReference type="PRINTS" id="PR00097">
    <property type="entry name" value="ANTSNTHASEII"/>
</dbReference>
<dbReference type="PRINTS" id="PR00096">
    <property type="entry name" value="GATASE"/>
</dbReference>
<dbReference type="SUPFAM" id="SSF52317">
    <property type="entry name" value="Class I glutamine amidotransferase-like"/>
    <property type="match status" value="1"/>
</dbReference>
<dbReference type="PROSITE" id="PS51273">
    <property type="entry name" value="GATASE_TYPE_1"/>
    <property type="match status" value="1"/>
</dbReference>
<comment type="function">
    <text evidence="1">Part of a heterotetrameric complex that catalyzes the two-step biosynthesis of anthranilate, an intermediate in the biosynthesis of L-tryptophan. In the first step, the glutamine-binding beta subunit (TrpG) of anthranilate synthase (AS) provides the glutamine amidotransferase activity which generates ammonia as a substrate that, along with chorismate, is used in the second step, catalyzed by the large alpha subunit of AS (TrpE) to produce anthranilate. In the absence of TrpG, TrpE can synthesize anthranilate directly from chorismate and high concentrations of ammonia (By similarity).</text>
</comment>
<comment type="catalytic activity">
    <reaction>
        <text>chorismate + L-glutamine = anthranilate + pyruvate + L-glutamate + H(+)</text>
        <dbReference type="Rhea" id="RHEA:21732"/>
        <dbReference type="ChEBI" id="CHEBI:15361"/>
        <dbReference type="ChEBI" id="CHEBI:15378"/>
        <dbReference type="ChEBI" id="CHEBI:16567"/>
        <dbReference type="ChEBI" id="CHEBI:29748"/>
        <dbReference type="ChEBI" id="CHEBI:29985"/>
        <dbReference type="ChEBI" id="CHEBI:58359"/>
        <dbReference type="EC" id="4.1.3.27"/>
    </reaction>
</comment>
<comment type="pathway">
    <text>Amino-acid biosynthesis; L-tryptophan biosynthesis; L-tryptophan from chorismate: step 1/5.</text>
</comment>
<comment type="subunit">
    <text evidence="1">Heterotetramer consisting of two non-identical subunits: a beta subunit (TrpG) and a large alpha subunit (TrpE).</text>
</comment>
<proteinExistence type="inferred from homology"/>
<organism>
    <name type="scientific">Corynebacterium glutamicum (strain ATCC 13032 / DSM 20300 / JCM 1318 / BCRC 11384 / CCUG 27702 / LMG 3730 / NBRC 12168 / NCIMB 10025 / NRRL B-2784 / 534)</name>
    <dbReference type="NCBI Taxonomy" id="196627"/>
    <lineage>
        <taxon>Bacteria</taxon>
        <taxon>Bacillati</taxon>
        <taxon>Actinomycetota</taxon>
        <taxon>Actinomycetes</taxon>
        <taxon>Mycobacteriales</taxon>
        <taxon>Corynebacteriaceae</taxon>
        <taxon>Corynebacterium</taxon>
    </lineage>
</organism>
<protein>
    <recommendedName>
        <fullName>Anthranilate synthase component 2</fullName>
        <shortName>AS</shortName>
        <shortName>ASII</shortName>
        <ecNumber>4.1.3.27</ecNumber>
    </recommendedName>
    <alternativeName>
        <fullName>Anthranilate synthase, GATase component</fullName>
    </alternativeName>
    <alternativeName>
        <fullName>Anthranilate synthase, glutamine amidotransferase component</fullName>
    </alternativeName>
</protein>
<gene>
    <name type="primary">trpG</name>
    <name type="ordered locus">Cgl3031</name>
    <name type="ordered locus">cg3360</name>
</gene>
<reference key="1">
    <citation type="journal article" date="1986" name="Nucleic Acids Res.">
        <title>Complete nucleotide and deduced amino acid sequences of the Brevibacterium lactofermentum tryptophan operon.</title>
        <authorList>
            <person name="Matsui K."/>
            <person name="Sano K."/>
            <person name="Ohtsubo E."/>
        </authorList>
    </citation>
    <scope>NUCLEOTIDE SEQUENCE [GENOMIC DNA]</scope>
</reference>
<reference key="2">
    <citation type="journal article" date="2003" name="Appl. Microbiol. Biotechnol.">
        <title>The Corynebacterium glutamicum genome: features and impacts on biotechnological processes.</title>
        <authorList>
            <person name="Ikeda M."/>
            <person name="Nakagawa S."/>
        </authorList>
    </citation>
    <scope>NUCLEOTIDE SEQUENCE [LARGE SCALE GENOMIC DNA]</scope>
    <source>
        <strain>ATCC 13032 / DSM 20300 / JCM 1318 / BCRC 11384 / CCUG 27702 / LMG 3730 / NBRC 12168 / NCIMB 10025 / NRRL B-2784 / 534</strain>
    </source>
</reference>
<reference key="3">
    <citation type="journal article" date="2003" name="J. Biotechnol.">
        <title>The complete Corynebacterium glutamicum ATCC 13032 genome sequence and its impact on the production of L-aspartate-derived amino acids and vitamins.</title>
        <authorList>
            <person name="Kalinowski J."/>
            <person name="Bathe B."/>
            <person name="Bartels D."/>
            <person name="Bischoff N."/>
            <person name="Bott M."/>
            <person name="Burkovski A."/>
            <person name="Dusch N."/>
            <person name="Eggeling L."/>
            <person name="Eikmanns B.J."/>
            <person name="Gaigalat L."/>
            <person name="Goesmann A."/>
            <person name="Hartmann M."/>
            <person name="Huthmacher K."/>
            <person name="Kraemer R."/>
            <person name="Linke B."/>
            <person name="McHardy A.C."/>
            <person name="Meyer F."/>
            <person name="Moeckel B."/>
            <person name="Pfefferle W."/>
            <person name="Puehler A."/>
            <person name="Rey D.A."/>
            <person name="Rueckert C."/>
            <person name="Rupp O."/>
            <person name="Sahm H."/>
            <person name="Wendisch V.F."/>
            <person name="Wiegraebe I."/>
            <person name="Tauch A."/>
        </authorList>
    </citation>
    <scope>NUCLEOTIDE SEQUENCE [LARGE SCALE GENOMIC DNA]</scope>
    <source>
        <strain>ATCC 13032 / DSM 20300 / JCM 1318 / BCRC 11384 / CCUG 27702 / LMG 3730 / NBRC 12168 / NCIMB 10025 / NRRL B-2784 / 534</strain>
    </source>
</reference>
<evidence type="ECO:0000250" key="1"/>
<evidence type="ECO:0000250" key="2">
    <source>
        <dbReference type="UniProtKB" id="P00900"/>
    </source>
</evidence>
<evidence type="ECO:0000255" key="3">
    <source>
        <dbReference type="PROSITE-ProRule" id="PRU00605"/>
    </source>
</evidence>
<evidence type="ECO:0000305" key="4"/>